<feature type="chain" id="PRO_0000144389" description="ATP synthase subunit alpha, chloroplastic">
    <location>
        <begin position="1"/>
        <end position="494"/>
    </location>
</feature>
<feature type="binding site" evidence="1">
    <location>
        <begin position="170"/>
        <end position="177"/>
    </location>
    <ligand>
        <name>ATP</name>
        <dbReference type="ChEBI" id="CHEBI:30616"/>
    </ligand>
</feature>
<feature type="site" description="Required for activity" evidence="1">
    <location>
        <position position="363"/>
    </location>
</feature>
<name>ATPA_PINTH</name>
<gene>
    <name evidence="1" type="primary">atpA</name>
</gene>
<dbReference type="EC" id="7.1.2.2" evidence="1"/>
<dbReference type="EMBL" id="D17510">
    <property type="protein sequence ID" value="BAA04319.1"/>
    <property type="molecule type" value="Genomic_DNA"/>
</dbReference>
<dbReference type="PIR" id="T07439">
    <property type="entry name" value="T07439"/>
</dbReference>
<dbReference type="RefSeq" id="NP_042360.1">
    <property type="nucleotide sequence ID" value="NC_001631.1"/>
</dbReference>
<dbReference type="SMR" id="P41602"/>
<dbReference type="GeneID" id="808991"/>
<dbReference type="GO" id="GO:0009535">
    <property type="term" value="C:chloroplast thylakoid membrane"/>
    <property type="evidence" value="ECO:0007669"/>
    <property type="project" value="UniProtKB-SubCell"/>
</dbReference>
<dbReference type="GO" id="GO:0045259">
    <property type="term" value="C:proton-transporting ATP synthase complex"/>
    <property type="evidence" value="ECO:0007669"/>
    <property type="project" value="UniProtKB-KW"/>
</dbReference>
<dbReference type="GO" id="GO:0043531">
    <property type="term" value="F:ADP binding"/>
    <property type="evidence" value="ECO:0007669"/>
    <property type="project" value="TreeGrafter"/>
</dbReference>
<dbReference type="GO" id="GO:0005524">
    <property type="term" value="F:ATP binding"/>
    <property type="evidence" value="ECO:0007669"/>
    <property type="project" value="UniProtKB-UniRule"/>
</dbReference>
<dbReference type="GO" id="GO:0046933">
    <property type="term" value="F:proton-transporting ATP synthase activity, rotational mechanism"/>
    <property type="evidence" value="ECO:0007669"/>
    <property type="project" value="UniProtKB-UniRule"/>
</dbReference>
<dbReference type="CDD" id="cd18113">
    <property type="entry name" value="ATP-synt_F1_alpha_C"/>
    <property type="match status" value="1"/>
</dbReference>
<dbReference type="CDD" id="cd18116">
    <property type="entry name" value="ATP-synt_F1_alpha_N"/>
    <property type="match status" value="1"/>
</dbReference>
<dbReference type="CDD" id="cd01132">
    <property type="entry name" value="F1-ATPase_alpha_CD"/>
    <property type="match status" value="1"/>
</dbReference>
<dbReference type="FunFam" id="1.20.150.20:FF:000001">
    <property type="entry name" value="ATP synthase subunit alpha"/>
    <property type="match status" value="1"/>
</dbReference>
<dbReference type="FunFam" id="2.40.30.20:FF:000001">
    <property type="entry name" value="ATP synthase subunit alpha"/>
    <property type="match status" value="1"/>
</dbReference>
<dbReference type="FunFam" id="3.40.50.300:FF:000002">
    <property type="entry name" value="ATP synthase subunit alpha"/>
    <property type="match status" value="1"/>
</dbReference>
<dbReference type="Gene3D" id="2.40.30.20">
    <property type="match status" value="1"/>
</dbReference>
<dbReference type="Gene3D" id="1.20.150.20">
    <property type="entry name" value="ATP synthase alpha/beta chain, C-terminal domain"/>
    <property type="match status" value="1"/>
</dbReference>
<dbReference type="Gene3D" id="3.40.50.300">
    <property type="entry name" value="P-loop containing nucleotide triphosphate hydrolases"/>
    <property type="match status" value="1"/>
</dbReference>
<dbReference type="HAMAP" id="MF_01346">
    <property type="entry name" value="ATP_synth_alpha_bact"/>
    <property type="match status" value="1"/>
</dbReference>
<dbReference type="InterPro" id="IPR023366">
    <property type="entry name" value="ATP_synth_asu-like_sf"/>
</dbReference>
<dbReference type="InterPro" id="IPR000793">
    <property type="entry name" value="ATP_synth_asu_C"/>
</dbReference>
<dbReference type="InterPro" id="IPR038376">
    <property type="entry name" value="ATP_synth_asu_C_sf"/>
</dbReference>
<dbReference type="InterPro" id="IPR033732">
    <property type="entry name" value="ATP_synth_F1_a_nt-bd_dom"/>
</dbReference>
<dbReference type="InterPro" id="IPR005294">
    <property type="entry name" value="ATP_synth_F1_asu"/>
</dbReference>
<dbReference type="InterPro" id="IPR020003">
    <property type="entry name" value="ATPase_a/bsu_AS"/>
</dbReference>
<dbReference type="InterPro" id="IPR004100">
    <property type="entry name" value="ATPase_F1/V1/A1_a/bsu_N"/>
</dbReference>
<dbReference type="InterPro" id="IPR036121">
    <property type="entry name" value="ATPase_F1/V1/A1_a/bsu_N_sf"/>
</dbReference>
<dbReference type="InterPro" id="IPR000194">
    <property type="entry name" value="ATPase_F1/V1/A1_a/bsu_nucl-bd"/>
</dbReference>
<dbReference type="InterPro" id="IPR027417">
    <property type="entry name" value="P-loop_NTPase"/>
</dbReference>
<dbReference type="NCBIfam" id="TIGR00962">
    <property type="entry name" value="atpA"/>
    <property type="match status" value="1"/>
</dbReference>
<dbReference type="NCBIfam" id="NF009884">
    <property type="entry name" value="PRK13343.1"/>
    <property type="match status" value="1"/>
</dbReference>
<dbReference type="PANTHER" id="PTHR48082">
    <property type="entry name" value="ATP SYNTHASE SUBUNIT ALPHA, MITOCHONDRIAL"/>
    <property type="match status" value="1"/>
</dbReference>
<dbReference type="PANTHER" id="PTHR48082:SF2">
    <property type="entry name" value="ATP SYNTHASE SUBUNIT ALPHA, MITOCHONDRIAL"/>
    <property type="match status" value="1"/>
</dbReference>
<dbReference type="Pfam" id="PF00006">
    <property type="entry name" value="ATP-synt_ab"/>
    <property type="match status" value="1"/>
</dbReference>
<dbReference type="Pfam" id="PF00306">
    <property type="entry name" value="ATP-synt_ab_C"/>
    <property type="match status" value="1"/>
</dbReference>
<dbReference type="Pfam" id="PF02874">
    <property type="entry name" value="ATP-synt_ab_N"/>
    <property type="match status" value="1"/>
</dbReference>
<dbReference type="SUPFAM" id="SSF47917">
    <property type="entry name" value="C-terminal domain of alpha and beta subunits of F1 ATP synthase"/>
    <property type="match status" value="1"/>
</dbReference>
<dbReference type="SUPFAM" id="SSF50615">
    <property type="entry name" value="N-terminal domain of alpha and beta subunits of F1 ATP synthase"/>
    <property type="match status" value="1"/>
</dbReference>
<dbReference type="SUPFAM" id="SSF52540">
    <property type="entry name" value="P-loop containing nucleoside triphosphate hydrolases"/>
    <property type="match status" value="1"/>
</dbReference>
<dbReference type="PROSITE" id="PS00152">
    <property type="entry name" value="ATPASE_ALPHA_BETA"/>
    <property type="match status" value="1"/>
</dbReference>
<keyword id="KW-0066">ATP synthesis</keyword>
<keyword id="KW-0067">ATP-binding</keyword>
<keyword id="KW-0139">CF(1)</keyword>
<keyword id="KW-0150">Chloroplast</keyword>
<keyword id="KW-0375">Hydrogen ion transport</keyword>
<keyword id="KW-0406">Ion transport</keyword>
<keyword id="KW-0472">Membrane</keyword>
<keyword id="KW-0547">Nucleotide-binding</keyword>
<keyword id="KW-0934">Plastid</keyword>
<keyword id="KW-0793">Thylakoid</keyword>
<keyword id="KW-1278">Translocase</keyword>
<keyword id="KW-0813">Transport</keyword>
<protein>
    <recommendedName>
        <fullName evidence="1">ATP synthase subunit alpha, chloroplastic</fullName>
        <ecNumber evidence="1">7.1.2.2</ecNumber>
    </recommendedName>
    <alternativeName>
        <fullName evidence="1">ATP synthase F1 sector subunit alpha</fullName>
    </alternativeName>
    <alternativeName>
        <fullName evidence="1">F-ATPase subunit alpha</fullName>
    </alternativeName>
</protein>
<proteinExistence type="inferred from homology"/>
<sequence>MGSIRLDEISSIIRKQIEQYNNEVRVGNLGTVLQVGDGIARIHGLDEVMAGELVEFGDGTVGIALNLGSDNVGAVLMGDGLMIQEGSSVRATGKIAQIPVSDAYLGRVVNALAQPIDGKGKISASEFRLIESPAPGIISRRSVYEPLQTGLIAIDSMIPIGRGQRELIIGDRQTGKTAVATDTILNQKSQNVICVYVAIGQRASSVAQVVNTFRERGAMAYTIVVAETADSPATLQYLAPYTGATLAEYFMYKKQHTSIIYDDLSKQAQAYRQMSLLLRRPPGREAYPGDVFYLHSRLLERAAKLSSQLGEGSVTALPIVETQAGDVSAYIPTNAISITDGQIFSSADLFNAGIRPAINVGISVSRVGSAAQIKAMKKVAGKLKLELAQFAELEAFAQFASDLDKATQDQLARGQRLRELLKQSQSAPLTVEEQIATIYTGTNGYLDIFEIAQVRKFLLGLRFYLIKNKPQFGEIIRSTGTFTEEAKALLEEAL</sequence>
<organism>
    <name type="scientific">Pinus thunbergii</name>
    <name type="common">Japanese black pine</name>
    <name type="synonym">Pinus thunbergiana</name>
    <dbReference type="NCBI Taxonomy" id="3350"/>
    <lineage>
        <taxon>Eukaryota</taxon>
        <taxon>Viridiplantae</taxon>
        <taxon>Streptophyta</taxon>
        <taxon>Embryophyta</taxon>
        <taxon>Tracheophyta</taxon>
        <taxon>Spermatophyta</taxon>
        <taxon>Pinopsida</taxon>
        <taxon>Pinidae</taxon>
        <taxon>Conifers I</taxon>
        <taxon>Pinales</taxon>
        <taxon>Pinaceae</taxon>
        <taxon>Pinus</taxon>
        <taxon>Pinus subgen. Pinus</taxon>
    </lineage>
</organism>
<evidence type="ECO:0000255" key="1">
    <source>
        <dbReference type="HAMAP-Rule" id="MF_01346"/>
    </source>
</evidence>
<reference key="1">
    <citation type="journal article" date="1994" name="Proc. Natl. Acad. Sci. U.S.A.">
        <title>Loss of all ndh genes as determined by sequencing the entire chloroplast genome of the black pine Pinus thunbergii.</title>
        <authorList>
            <person name="Wakasugi T."/>
            <person name="Tsudzuki J."/>
            <person name="Ito S."/>
            <person name="Nakashima K."/>
            <person name="Tsudzuki T."/>
            <person name="Sugiura M."/>
        </authorList>
    </citation>
    <scope>NUCLEOTIDE SEQUENCE [LARGE SCALE GENOMIC DNA]</scope>
</reference>
<accession>P41602</accession>
<geneLocation type="chloroplast"/>
<comment type="function">
    <text>Produces ATP from ADP in the presence of a proton gradient across the membrane. The alpha chain is a regulatory subunit.</text>
</comment>
<comment type="catalytic activity">
    <reaction evidence="1">
        <text>ATP + H2O + 4 H(+)(in) = ADP + phosphate + 5 H(+)(out)</text>
        <dbReference type="Rhea" id="RHEA:57720"/>
        <dbReference type="ChEBI" id="CHEBI:15377"/>
        <dbReference type="ChEBI" id="CHEBI:15378"/>
        <dbReference type="ChEBI" id="CHEBI:30616"/>
        <dbReference type="ChEBI" id="CHEBI:43474"/>
        <dbReference type="ChEBI" id="CHEBI:456216"/>
        <dbReference type="EC" id="7.1.2.2"/>
    </reaction>
</comment>
<comment type="subunit">
    <text evidence="1">F-type ATPases have 2 components, CF(1) - the catalytic core - and CF(0) - the membrane proton channel. CF(1) has five subunits: alpha(3), beta(3), gamma(1), delta(1), epsilon(1). CF(0) has four main subunits: a, b, b' and c.</text>
</comment>
<comment type="subcellular location">
    <subcellularLocation>
        <location evidence="1">Plastid</location>
        <location evidence="1">Chloroplast thylakoid membrane</location>
        <topology evidence="1">Peripheral membrane protein</topology>
    </subcellularLocation>
</comment>
<comment type="similarity">
    <text evidence="1">Belongs to the ATPase alpha/beta chains family.</text>
</comment>